<reference key="1">
    <citation type="journal article" date="2015" name="Sci. Data">
        <title>Human olfactory receptor responses to odorants.</title>
        <authorList>
            <person name="Mainland J.D."/>
            <person name="Li Y.R."/>
            <person name="Zhou T."/>
            <person name="Liu W.L."/>
            <person name="Matsunami H."/>
        </authorList>
    </citation>
    <scope>NUCLEOTIDE SEQUENCE [GENOMIC DNA]</scope>
    <scope>VARIANTS ALA-36; ASN-50 AND ASN-170</scope>
</reference>
<reference key="2">
    <citation type="journal article" date="2006" name="Nature">
        <title>The DNA sequence and biological annotation of human chromosome 1.</title>
        <authorList>
            <person name="Gregory S.G."/>
            <person name="Barlow K.F."/>
            <person name="McLay K.E."/>
            <person name="Kaul R."/>
            <person name="Swarbreck D."/>
            <person name="Dunham A."/>
            <person name="Scott C.E."/>
            <person name="Howe K.L."/>
            <person name="Woodfine K."/>
            <person name="Spencer C.C.A."/>
            <person name="Jones M.C."/>
            <person name="Gillson C."/>
            <person name="Searle S."/>
            <person name="Zhou Y."/>
            <person name="Kokocinski F."/>
            <person name="McDonald L."/>
            <person name="Evans R."/>
            <person name="Phillips K."/>
            <person name="Atkinson A."/>
            <person name="Cooper R."/>
            <person name="Jones C."/>
            <person name="Hall R.E."/>
            <person name="Andrews T.D."/>
            <person name="Lloyd C."/>
            <person name="Ainscough R."/>
            <person name="Almeida J.P."/>
            <person name="Ambrose K.D."/>
            <person name="Anderson F."/>
            <person name="Andrew R.W."/>
            <person name="Ashwell R.I.S."/>
            <person name="Aubin K."/>
            <person name="Babbage A.K."/>
            <person name="Bagguley C.L."/>
            <person name="Bailey J."/>
            <person name="Beasley H."/>
            <person name="Bethel G."/>
            <person name="Bird C.P."/>
            <person name="Bray-Allen S."/>
            <person name="Brown J.Y."/>
            <person name="Brown A.J."/>
            <person name="Buckley D."/>
            <person name="Burton J."/>
            <person name="Bye J."/>
            <person name="Carder C."/>
            <person name="Chapman J.C."/>
            <person name="Clark S.Y."/>
            <person name="Clarke G."/>
            <person name="Clee C."/>
            <person name="Cobley V."/>
            <person name="Collier R.E."/>
            <person name="Corby N."/>
            <person name="Coville G.J."/>
            <person name="Davies J."/>
            <person name="Deadman R."/>
            <person name="Dunn M."/>
            <person name="Earthrowl M."/>
            <person name="Ellington A.G."/>
            <person name="Errington H."/>
            <person name="Frankish A."/>
            <person name="Frankland J."/>
            <person name="French L."/>
            <person name="Garner P."/>
            <person name="Garnett J."/>
            <person name="Gay L."/>
            <person name="Ghori M.R.J."/>
            <person name="Gibson R."/>
            <person name="Gilby L.M."/>
            <person name="Gillett W."/>
            <person name="Glithero R.J."/>
            <person name="Grafham D.V."/>
            <person name="Griffiths C."/>
            <person name="Griffiths-Jones S."/>
            <person name="Grocock R."/>
            <person name="Hammond S."/>
            <person name="Harrison E.S.I."/>
            <person name="Hart E."/>
            <person name="Haugen E."/>
            <person name="Heath P.D."/>
            <person name="Holmes S."/>
            <person name="Holt K."/>
            <person name="Howden P.J."/>
            <person name="Hunt A.R."/>
            <person name="Hunt S.E."/>
            <person name="Hunter G."/>
            <person name="Isherwood J."/>
            <person name="James R."/>
            <person name="Johnson C."/>
            <person name="Johnson D."/>
            <person name="Joy A."/>
            <person name="Kay M."/>
            <person name="Kershaw J.K."/>
            <person name="Kibukawa M."/>
            <person name="Kimberley A.M."/>
            <person name="King A."/>
            <person name="Knights A.J."/>
            <person name="Lad H."/>
            <person name="Laird G."/>
            <person name="Lawlor S."/>
            <person name="Leongamornlert D.A."/>
            <person name="Lloyd D.M."/>
            <person name="Loveland J."/>
            <person name="Lovell J."/>
            <person name="Lush M.J."/>
            <person name="Lyne R."/>
            <person name="Martin S."/>
            <person name="Mashreghi-Mohammadi M."/>
            <person name="Matthews L."/>
            <person name="Matthews N.S.W."/>
            <person name="McLaren S."/>
            <person name="Milne S."/>
            <person name="Mistry S."/>
            <person name="Moore M.J.F."/>
            <person name="Nickerson T."/>
            <person name="O'Dell C.N."/>
            <person name="Oliver K."/>
            <person name="Palmeiri A."/>
            <person name="Palmer S.A."/>
            <person name="Parker A."/>
            <person name="Patel D."/>
            <person name="Pearce A.V."/>
            <person name="Peck A.I."/>
            <person name="Pelan S."/>
            <person name="Phelps K."/>
            <person name="Phillimore B.J."/>
            <person name="Plumb R."/>
            <person name="Rajan J."/>
            <person name="Raymond C."/>
            <person name="Rouse G."/>
            <person name="Saenphimmachak C."/>
            <person name="Sehra H.K."/>
            <person name="Sheridan E."/>
            <person name="Shownkeen R."/>
            <person name="Sims S."/>
            <person name="Skuce C.D."/>
            <person name="Smith M."/>
            <person name="Steward C."/>
            <person name="Subramanian S."/>
            <person name="Sycamore N."/>
            <person name="Tracey A."/>
            <person name="Tromans A."/>
            <person name="Van Helmond Z."/>
            <person name="Wall M."/>
            <person name="Wallis J.M."/>
            <person name="White S."/>
            <person name="Whitehead S.L."/>
            <person name="Wilkinson J.E."/>
            <person name="Willey D.L."/>
            <person name="Williams H."/>
            <person name="Wilming L."/>
            <person name="Wray P.W."/>
            <person name="Wu Z."/>
            <person name="Coulson A."/>
            <person name="Vaudin M."/>
            <person name="Sulston J.E."/>
            <person name="Durbin R.M."/>
            <person name="Hubbard T."/>
            <person name="Wooster R."/>
            <person name="Dunham I."/>
            <person name="Carter N.P."/>
            <person name="McVean G."/>
            <person name="Ross M.T."/>
            <person name="Harrow J."/>
            <person name="Olson M.V."/>
            <person name="Beck S."/>
            <person name="Rogers J."/>
            <person name="Bentley D.R."/>
        </authorList>
    </citation>
    <scope>NUCLEOTIDE SEQUENCE [LARGE SCALE GENOMIC DNA]</scope>
</reference>
<reference key="3">
    <citation type="submission" date="2005-09" db="EMBL/GenBank/DDBJ databases">
        <authorList>
            <person name="Mural R.J."/>
            <person name="Istrail S."/>
            <person name="Sutton G.G."/>
            <person name="Florea L."/>
            <person name="Halpern A.L."/>
            <person name="Mobarry C.M."/>
            <person name="Lippert R."/>
            <person name="Walenz B."/>
            <person name="Shatkay H."/>
            <person name="Dew I."/>
            <person name="Miller J.R."/>
            <person name="Flanigan M.J."/>
            <person name="Edwards N.J."/>
            <person name="Bolanos R."/>
            <person name="Fasulo D."/>
            <person name="Halldorsson B.V."/>
            <person name="Hannenhalli S."/>
            <person name="Turner R."/>
            <person name="Yooseph S."/>
            <person name="Lu F."/>
            <person name="Nusskern D.R."/>
            <person name="Shue B.C."/>
            <person name="Zheng X.H."/>
            <person name="Zhong F."/>
            <person name="Delcher A.L."/>
            <person name="Huson D.H."/>
            <person name="Kravitz S.A."/>
            <person name="Mouchard L."/>
            <person name="Reinert K."/>
            <person name="Remington K.A."/>
            <person name="Clark A.G."/>
            <person name="Waterman M.S."/>
            <person name="Eichler E.E."/>
            <person name="Adams M.D."/>
            <person name="Hunkapiller M.W."/>
            <person name="Myers E.W."/>
            <person name="Venter J.C."/>
        </authorList>
    </citation>
    <scope>NUCLEOTIDE SEQUENCE [LARGE SCALE GENOMIC DNA]</scope>
    <scope>VARIANTS ALA-36; ASN-50 AND ASN-170</scope>
</reference>
<reference key="4">
    <citation type="journal article" date="2004" name="Genome Res.">
        <title>The status, quality, and expansion of the NIH full-length cDNA project: the Mammalian Gene Collection (MGC).</title>
        <authorList>
            <consortium name="The MGC Project Team"/>
        </authorList>
    </citation>
    <scope>NUCLEOTIDE SEQUENCE [LARGE SCALE MRNA]</scope>
    <scope>VARIANTS ALA-36; ASN-50 AND ASN-170</scope>
</reference>
<feature type="chain" id="PRO_0000310414" description="Olfactory receptor 14I1">
    <location>
        <begin position="1"/>
        <end position="311"/>
    </location>
</feature>
<feature type="topological domain" description="Extracellular" evidence="1">
    <location>
        <begin position="1"/>
        <end position="26"/>
    </location>
</feature>
<feature type="transmembrane region" description="Helical; Name=1" evidence="1">
    <location>
        <begin position="27"/>
        <end position="47"/>
    </location>
</feature>
<feature type="topological domain" description="Cytoplasmic" evidence="1">
    <location>
        <begin position="48"/>
        <end position="55"/>
    </location>
</feature>
<feature type="transmembrane region" description="Helical; Name=2" evidence="1">
    <location>
        <begin position="56"/>
        <end position="76"/>
    </location>
</feature>
<feature type="topological domain" description="Extracellular" evidence="1">
    <location>
        <begin position="77"/>
        <end position="92"/>
    </location>
</feature>
<feature type="transmembrane region" description="Helical; Name=3" evidence="1">
    <location>
        <begin position="93"/>
        <end position="113"/>
    </location>
</feature>
<feature type="topological domain" description="Cytoplasmic" evidence="1">
    <location>
        <begin position="114"/>
        <end position="141"/>
    </location>
</feature>
<feature type="transmembrane region" description="Helical; Name=4" evidence="1">
    <location>
        <begin position="142"/>
        <end position="162"/>
    </location>
</feature>
<feature type="topological domain" description="Extracellular" evidence="1">
    <location>
        <begin position="163"/>
        <end position="189"/>
    </location>
</feature>
<feature type="transmembrane region" description="Helical; Name=5" evidence="1">
    <location>
        <begin position="190"/>
        <end position="210"/>
    </location>
</feature>
<feature type="topological domain" description="Cytoplasmic" evidence="1">
    <location>
        <begin position="211"/>
        <end position="241"/>
    </location>
</feature>
<feature type="transmembrane region" description="Helical; Name=6" evidence="1">
    <location>
        <begin position="242"/>
        <end position="262"/>
    </location>
</feature>
<feature type="topological domain" description="Extracellular" evidence="1">
    <location>
        <begin position="263"/>
        <end position="269"/>
    </location>
</feature>
<feature type="transmembrane region" description="Helical; Name=7" evidence="1">
    <location>
        <begin position="270"/>
        <end position="290"/>
    </location>
</feature>
<feature type="topological domain" description="Cytoplasmic" evidence="1">
    <location>
        <begin position="291"/>
        <end position="311"/>
    </location>
</feature>
<feature type="glycosylation site" description="N-linked (GlcNAc...) asparagine" evidence="1">
    <location>
        <position position="3"/>
    </location>
</feature>
<feature type="disulfide bond" evidence="2">
    <location>
        <begin position="95"/>
        <end position="188"/>
    </location>
</feature>
<feature type="sequence variant" id="VAR_037030" description="In dbSNP:rs4462184." evidence="3 4 5">
    <original>V</original>
    <variation>A</variation>
    <location>
        <position position="36"/>
    </location>
</feature>
<feature type="sequence variant" id="VAR_037031" description="In dbSNP:rs4509608." evidence="3 4 5">
    <original>D</original>
    <variation>N</variation>
    <location>
        <position position="50"/>
    </location>
</feature>
<feature type="sequence variant" id="VAR_062073" description="In dbSNP:rs41311583.">
    <original>L</original>
    <variation>M</variation>
    <location>
        <position position="84"/>
    </location>
</feature>
<feature type="sequence variant" id="VAR_037032" description="In dbSNP:rs2000390." evidence="3 4 5">
    <original>S</original>
    <variation>N</variation>
    <location>
        <position position="170"/>
    </location>
</feature>
<feature type="sequence variant" id="VAR_062074" description="In dbSNP:rs55871516.">
    <original>Y</original>
    <variation>C</variation>
    <location>
        <position position="216"/>
    </location>
</feature>
<protein>
    <recommendedName>
        <fullName>Olfactory receptor 14I1</fullName>
    </recommendedName>
    <alternativeName>
        <fullName>Olfactory receptor 5BU1</fullName>
    </alternativeName>
</protein>
<organism>
    <name type="scientific">Homo sapiens</name>
    <name type="common">Human</name>
    <dbReference type="NCBI Taxonomy" id="9606"/>
    <lineage>
        <taxon>Eukaryota</taxon>
        <taxon>Metazoa</taxon>
        <taxon>Chordata</taxon>
        <taxon>Craniata</taxon>
        <taxon>Vertebrata</taxon>
        <taxon>Euteleostomi</taxon>
        <taxon>Mammalia</taxon>
        <taxon>Eutheria</taxon>
        <taxon>Euarchontoglires</taxon>
        <taxon>Primates</taxon>
        <taxon>Haplorrhini</taxon>
        <taxon>Catarrhini</taxon>
        <taxon>Hominidae</taxon>
        <taxon>Homo</taxon>
    </lineage>
</organism>
<keyword id="KW-1003">Cell membrane</keyword>
<keyword id="KW-1015">Disulfide bond</keyword>
<keyword id="KW-0297">G-protein coupled receptor</keyword>
<keyword id="KW-0325">Glycoprotein</keyword>
<keyword id="KW-0472">Membrane</keyword>
<keyword id="KW-0552">Olfaction</keyword>
<keyword id="KW-0675">Receptor</keyword>
<keyword id="KW-1185">Reference proteome</keyword>
<keyword id="KW-0716">Sensory transduction</keyword>
<keyword id="KW-0807">Transducer</keyword>
<keyword id="KW-0812">Transmembrane</keyword>
<keyword id="KW-1133">Transmembrane helix</keyword>
<evidence type="ECO:0000255" key="1"/>
<evidence type="ECO:0000255" key="2">
    <source>
        <dbReference type="PROSITE-ProRule" id="PRU00521"/>
    </source>
</evidence>
<evidence type="ECO:0000269" key="3">
    <source>
    </source>
</evidence>
<evidence type="ECO:0000269" key="4">
    <source>
    </source>
</evidence>
<evidence type="ECO:0000269" key="5">
    <source ref="3"/>
</evidence>
<evidence type="ECO:0000305" key="6"/>
<accession>A6ND48</accession>
<accession>B2RNZ0</accession>
<proteinExistence type="evidence at protein level"/>
<comment type="function">
    <text evidence="6">Odorant receptor.</text>
</comment>
<comment type="interaction">
    <interactant intactId="EBI-13413682">
        <id>A6ND48</id>
    </interactant>
    <interactant intactId="EBI-11959885">
        <id>Q07627</id>
        <label>KRTAP1-1</label>
    </interactant>
    <organismsDiffer>false</organismsDiffer>
    <experiments>3</experiments>
</comment>
<comment type="subcellular location">
    <subcellularLocation>
        <location>Cell membrane</location>
        <topology>Multi-pass membrane protein</topology>
    </subcellularLocation>
</comment>
<comment type="similarity">
    <text evidence="2">Belongs to the G-protein coupled receptor 1 family.</text>
</comment>
<comment type="online information" name="Human Olfactory Receptor Data Exploratorium (HORDE)">
    <link uri="http://genome.weizmann.ac.il/horde/card/index/symbol:OR14I1"/>
</comment>
<name>O14I1_HUMAN</name>
<sequence length="311" mass="35175">MDNLTKVTEFLLMEFSGIWELQVLHAGLFLLIYLAVLVGNLLIIAVITLDQHLHTPMYFFLKNLSVLDLCYISVTVPKSIRNSLTRRSSISYLGCVAQVYFFSAFASAELAFLTVMSYDRYVAICHPLQYRAVMTSGGCYQMAVTTWLSCFSYAAVHTGNMFREHVCRSSVIHQFFRDIPHVLALVSCEVFFVEFLTLALSSCLVLGCFILMMISYFQIFSTVLRIPSGQSRAKAFSTCSPQLIVIMLFLTTGLFAALGPIAKALSIQDLVIALTYTVLPPFLNPIIYSLRNKEIKTAMWRLFVKIYFLQK</sequence>
<dbReference type="EMBL" id="KP290503">
    <property type="protein sequence ID" value="ALI87665.1"/>
    <property type="molecule type" value="Genomic_DNA"/>
</dbReference>
<dbReference type="EMBL" id="AC098483">
    <property type="status" value="NOT_ANNOTATED_CDS"/>
    <property type="molecule type" value="Genomic_DNA"/>
</dbReference>
<dbReference type="EMBL" id="CH471257">
    <property type="protein sequence ID" value="EAW57530.1"/>
    <property type="molecule type" value="Genomic_DNA"/>
</dbReference>
<dbReference type="EMBL" id="BC137188">
    <property type="protein sequence ID" value="AAI37189.1"/>
    <property type="molecule type" value="mRNA"/>
</dbReference>
<dbReference type="EMBL" id="BC137189">
    <property type="protein sequence ID" value="AAI37190.1"/>
    <property type="molecule type" value="mRNA"/>
</dbReference>
<dbReference type="CCDS" id="CCDS31125.1"/>
<dbReference type="RefSeq" id="NP_001004734.1">
    <property type="nucleotide sequence ID" value="NM_001004734.4"/>
</dbReference>
<dbReference type="RefSeq" id="XP_005273189.1">
    <property type="nucleotide sequence ID" value="XM_005273132.3"/>
</dbReference>
<dbReference type="RefSeq" id="XP_047276599.1">
    <property type="nucleotide sequence ID" value="XM_047420643.1"/>
</dbReference>
<dbReference type="SMR" id="A6ND48"/>
<dbReference type="BioGRID" id="135302">
    <property type="interactions" value="31"/>
</dbReference>
<dbReference type="FunCoup" id="A6ND48">
    <property type="interactions" value="417"/>
</dbReference>
<dbReference type="IntAct" id="A6ND48">
    <property type="interactions" value="2"/>
</dbReference>
<dbReference type="STRING" id="9606.ENSP00000339726"/>
<dbReference type="GlyCosmos" id="A6ND48">
    <property type="glycosylation" value="1 site, No reported glycans"/>
</dbReference>
<dbReference type="GlyGen" id="A6ND48">
    <property type="glycosylation" value="1 site"/>
</dbReference>
<dbReference type="iPTMnet" id="A6ND48"/>
<dbReference type="PhosphoSitePlus" id="A6ND48"/>
<dbReference type="BioMuta" id="OR14I1"/>
<dbReference type="MassIVE" id="A6ND48"/>
<dbReference type="PaxDb" id="9606-ENSP00000339726"/>
<dbReference type="Antibodypedia" id="74074">
    <property type="antibodies" value="22 antibodies from 9 providers"/>
</dbReference>
<dbReference type="DNASU" id="401994"/>
<dbReference type="Ensembl" id="ENST00000342623.5">
    <property type="protein sequence ID" value="ENSP00000339726.3"/>
    <property type="gene ID" value="ENSG00000189181.6"/>
</dbReference>
<dbReference type="Ensembl" id="ENST00000695265.1">
    <property type="protein sequence ID" value="ENSP00000511782.1"/>
    <property type="gene ID" value="ENSG00000189181.6"/>
</dbReference>
<dbReference type="GeneID" id="401994"/>
<dbReference type="KEGG" id="hsa:401994"/>
<dbReference type="MANE-Select" id="ENST00000695265.1">
    <property type="protein sequence ID" value="ENSP00000511782.1"/>
    <property type="RefSeq nucleotide sequence ID" value="NM_001004734.4"/>
    <property type="RefSeq protein sequence ID" value="NP_001004734.1"/>
</dbReference>
<dbReference type="UCSC" id="uc001ieu.1">
    <property type="organism name" value="human"/>
</dbReference>
<dbReference type="AGR" id="HGNC:19575"/>
<dbReference type="CTD" id="401994"/>
<dbReference type="GeneCards" id="OR14I1"/>
<dbReference type="HGNC" id="HGNC:19575">
    <property type="gene designation" value="OR14I1"/>
</dbReference>
<dbReference type="HPA" id="ENSG00000189181">
    <property type="expression patterns" value="Tissue enriched (brain)"/>
</dbReference>
<dbReference type="MIM" id="618516">
    <property type="type" value="gene"/>
</dbReference>
<dbReference type="neXtProt" id="NX_A6ND48"/>
<dbReference type="OpenTargets" id="ENSG00000189181"/>
<dbReference type="PharmGKB" id="PA162398443"/>
<dbReference type="VEuPathDB" id="HostDB:ENSG00000189181"/>
<dbReference type="eggNOG" id="ENOG502SHXQ">
    <property type="taxonomic scope" value="Eukaryota"/>
</dbReference>
<dbReference type="GeneTree" id="ENSGT01050000244828"/>
<dbReference type="HOGENOM" id="CLU_012526_0_1_1"/>
<dbReference type="InParanoid" id="A6ND48"/>
<dbReference type="OMA" id="TGNMFRE"/>
<dbReference type="OrthoDB" id="6151005at2759"/>
<dbReference type="PAN-GO" id="A6ND48">
    <property type="GO annotations" value="2 GO annotations based on evolutionary models"/>
</dbReference>
<dbReference type="PhylomeDB" id="A6ND48"/>
<dbReference type="TreeFam" id="TF352740"/>
<dbReference type="PathwayCommons" id="A6ND48"/>
<dbReference type="Reactome" id="R-HSA-9752946">
    <property type="pathway name" value="Expression and translocation of olfactory receptors"/>
</dbReference>
<dbReference type="SignaLink" id="A6ND48"/>
<dbReference type="BioGRID-ORCS" id="401994">
    <property type="hits" value="13 hits in 751 CRISPR screens"/>
</dbReference>
<dbReference type="ChiTaRS" id="OR14I1">
    <property type="organism name" value="human"/>
</dbReference>
<dbReference type="GenomeRNAi" id="401994"/>
<dbReference type="Pharos" id="A6ND48">
    <property type="development level" value="Tdark"/>
</dbReference>
<dbReference type="PRO" id="PR:A6ND48"/>
<dbReference type="Proteomes" id="UP000005640">
    <property type="component" value="Chromosome 1"/>
</dbReference>
<dbReference type="RNAct" id="A6ND48">
    <property type="molecule type" value="protein"/>
</dbReference>
<dbReference type="Bgee" id="ENSG00000189181">
    <property type="expression patterns" value="Expressed in male germ line stem cell (sensu Vertebrata) in testis and 20 other cell types or tissues"/>
</dbReference>
<dbReference type="GO" id="GO:0005886">
    <property type="term" value="C:plasma membrane"/>
    <property type="evidence" value="ECO:0007669"/>
    <property type="project" value="UniProtKB-SubCell"/>
</dbReference>
<dbReference type="GO" id="GO:0004930">
    <property type="term" value="F:G protein-coupled receptor activity"/>
    <property type="evidence" value="ECO:0007669"/>
    <property type="project" value="UniProtKB-KW"/>
</dbReference>
<dbReference type="GO" id="GO:0005549">
    <property type="term" value="F:odorant binding"/>
    <property type="evidence" value="ECO:0000318"/>
    <property type="project" value="GO_Central"/>
</dbReference>
<dbReference type="GO" id="GO:0004984">
    <property type="term" value="F:olfactory receptor activity"/>
    <property type="evidence" value="ECO:0000318"/>
    <property type="project" value="GO_Central"/>
</dbReference>
<dbReference type="CDD" id="cd15227">
    <property type="entry name" value="7tmA_OR14-like"/>
    <property type="match status" value="1"/>
</dbReference>
<dbReference type="FunFam" id="1.10.1220.70:FF:000001">
    <property type="entry name" value="Olfactory receptor"/>
    <property type="match status" value="1"/>
</dbReference>
<dbReference type="FunFam" id="1.20.1070.10:FF:000037">
    <property type="entry name" value="Olfactory receptor"/>
    <property type="match status" value="1"/>
</dbReference>
<dbReference type="Gene3D" id="1.20.1070.10">
    <property type="entry name" value="Rhodopsin 7-helix transmembrane proteins"/>
    <property type="match status" value="1"/>
</dbReference>
<dbReference type="InterPro" id="IPR000276">
    <property type="entry name" value="GPCR_Rhodpsn"/>
</dbReference>
<dbReference type="InterPro" id="IPR017452">
    <property type="entry name" value="GPCR_Rhodpsn_7TM"/>
</dbReference>
<dbReference type="InterPro" id="IPR000725">
    <property type="entry name" value="Olfact_rcpt"/>
</dbReference>
<dbReference type="InterPro" id="IPR050516">
    <property type="entry name" value="Olfactory_GPCR"/>
</dbReference>
<dbReference type="PANTHER" id="PTHR26452">
    <property type="entry name" value="OLFACTORY RECEPTOR"/>
    <property type="match status" value="1"/>
</dbReference>
<dbReference type="Pfam" id="PF13853">
    <property type="entry name" value="7tm_4"/>
    <property type="match status" value="1"/>
</dbReference>
<dbReference type="PRINTS" id="PR00237">
    <property type="entry name" value="GPCRRHODOPSN"/>
</dbReference>
<dbReference type="PRINTS" id="PR00245">
    <property type="entry name" value="OLFACTORYR"/>
</dbReference>
<dbReference type="SUPFAM" id="SSF81321">
    <property type="entry name" value="Family A G protein-coupled receptor-like"/>
    <property type="match status" value="1"/>
</dbReference>
<dbReference type="PROSITE" id="PS00237">
    <property type="entry name" value="G_PROTEIN_RECEP_F1_1"/>
    <property type="match status" value="1"/>
</dbReference>
<dbReference type="PROSITE" id="PS50262">
    <property type="entry name" value="G_PROTEIN_RECEP_F1_2"/>
    <property type="match status" value="1"/>
</dbReference>
<gene>
    <name type="primary">OR14I1</name>
    <name type="synonym">OR5BU1</name>
    <name type="synonym">OR5BU1P</name>
</gene>